<keyword id="KW-0067">ATP-binding</keyword>
<keyword id="KW-0963">Cytoplasm</keyword>
<keyword id="KW-0436">Ligase</keyword>
<keyword id="KW-0547">Nucleotide-binding</keyword>
<keyword id="KW-0566">Pantothenate biosynthesis</keyword>
<keyword id="KW-1185">Reference proteome</keyword>
<evidence type="ECO:0000255" key="1">
    <source>
        <dbReference type="HAMAP-Rule" id="MF_00158"/>
    </source>
</evidence>
<sequence length="302" mass="33279">MIEVQTTSQLQEQLQDAREQGKTIGFVPTMGALHGGHQSLVRACAQTCDLVVVSIYVNPLQFGPHEDYHEYPRQLEKDRVLAEEAGCDVLFCPTDEEIYPDGYTQTVHVKQGANVLCGKSRPGHFDGVATVVLKLFMLVQPDFAFFGEKDAQQVAIIKQLVKEFFLPVTIVACPTVREDDGLAKSSRNANLTPAERQVAPKLYAALRDAAKSPTSQLSDLVQQVRQHLAALPLGCIDYVEAYEYPSLKKVEQSDGIVILALAYQFSKARLIDHILIDMNNRNGGLNDVSDNDESKIASCTGD</sequence>
<proteinExistence type="inferred from homology"/>
<comment type="function">
    <text evidence="1">Catalyzes the condensation of pantoate with beta-alanine in an ATP-dependent reaction via a pantoyl-adenylate intermediate.</text>
</comment>
<comment type="catalytic activity">
    <reaction evidence="1">
        <text>(R)-pantoate + beta-alanine + ATP = (R)-pantothenate + AMP + diphosphate + H(+)</text>
        <dbReference type="Rhea" id="RHEA:10912"/>
        <dbReference type="ChEBI" id="CHEBI:15378"/>
        <dbReference type="ChEBI" id="CHEBI:15980"/>
        <dbReference type="ChEBI" id="CHEBI:29032"/>
        <dbReference type="ChEBI" id="CHEBI:30616"/>
        <dbReference type="ChEBI" id="CHEBI:33019"/>
        <dbReference type="ChEBI" id="CHEBI:57966"/>
        <dbReference type="ChEBI" id="CHEBI:456215"/>
        <dbReference type="EC" id="6.3.2.1"/>
    </reaction>
</comment>
<comment type="pathway">
    <text evidence="1">Cofactor biosynthesis; (R)-pantothenate biosynthesis; (R)-pantothenate from (R)-pantoate and beta-alanine: step 1/1.</text>
</comment>
<comment type="subunit">
    <text evidence="1">Homodimer.</text>
</comment>
<comment type="subcellular location">
    <subcellularLocation>
        <location evidence="1">Cytoplasm</location>
    </subcellularLocation>
</comment>
<comment type="miscellaneous">
    <text evidence="1">The reaction proceeds by a bi uni uni bi ping pong mechanism.</text>
</comment>
<comment type="similarity">
    <text evidence="1">Belongs to the pantothenate synthetase family.</text>
</comment>
<gene>
    <name evidence="1" type="primary">panC</name>
    <name type="ordered locus">ABC2066</name>
</gene>
<dbReference type="EC" id="6.3.2.1" evidence="1"/>
<dbReference type="EMBL" id="AP006627">
    <property type="protein sequence ID" value="BAD64601.1"/>
    <property type="molecule type" value="Genomic_DNA"/>
</dbReference>
<dbReference type="RefSeq" id="WP_011246909.1">
    <property type="nucleotide sequence ID" value="NC_006582.1"/>
</dbReference>
<dbReference type="SMR" id="Q5WGA4"/>
<dbReference type="STRING" id="66692.ABC2066"/>
<dbReference type="KEGG" id="bcl:ABC2066"/>
<dbReference type="eggNOG" id="COG0414">
    <property type="taxonomic scope" value="Bacteria"/>
</dbReference>
<dbReference type="HOGENOM" id="CLU_047148_0_0_9"/>
<dbReference type="OrthoDB" id="9773087at2"/>
<dbReference type="UniPathway" id="UPA00028">
    <property type="reaction ID" value="UER00005"/>
</dbReference>
<dbReference type="Proteomes" id="UP000001168">
    <property type="component" value="Chromosome"/>
</dbReference>
<dbReference type="GO" id="GO:0005829">
    <property type="term" value="C:cytosol"/>
    <property type="evidence" value="ECO:0007669"/>
    <property type="project" value="TreeGrafter"/>
</dbReference>
<dbReference type="GO" id="GO:0005524">
    <property type="term" value="F:ATP binding"/>
    <property type="evidence" value="ECO:0007669"/>
    <property type="project" value="UniProtKB-KW"/>
</dbReference>
<dbReference type="GO" id="GO:0004592">
    <property type="term" value="F:pantoate-beta-alanine ligase activity"/>
    <property type="evidence" value="ECO:0007669"/>
    <property type="project" value="UniProtKB-UniRule"/>
</dbReference>
<dbReference type="GO" id="GO:0015940">
    <property type="term" value="P:pantothenate biosynthetic process"/>
    <property type="evidence" value="ECO:0007669"/>
    <property type="project" value="UniProtKB-UniRule"/>
</dbReference>
<dbReference type="CDD" id="cd00560">
    <property type="entry name" value="PanC"/>
    <property type="match status" value="1"/>
</dbReference>
<dbReference type="FunFam" id="3.40.50.620:FF:000114">
    <property type="entry name" value="Pantothenate synthetase"/>
    <property type="match status" value="1"/>
</dbReference>
<dbReference type="Gene3D" id="3.40.50.620">
    <property type="entry name" value="HUPs"/>
    <property type="match status" value="1"/>
</dbReference>
<dbReference type="Gene3D" id="3.30.1300.10">
    <property type="entry name" value="Pantoate-beta-alanine ligase, C-terminal domain"/>
    <property type="match status" value="1"/>
</dbReference>
<dbReference type="HAMAP" id="MF_00158">
    <property type="entry name" value="PanC"/>
    <property type="match status" value="1"/>
</dbReference>
<dbReference type="InterPro" id="IPR003721">
    <property type="entry name" value="Pantoate_ligase"/>
</dbReference>
<dbReference type="InterPro" id="IPR042176">
    <property type="entry name" value="Pantoate_ligase_C"/>
</dbReference>
<dbReference type="InterPro" id="IPR014729">
    <property type="entry name" value="Rossmann-like_a/b/a_fold"/>
</dbReference>
<dbReference type="NCBIfam" id="TIGR00018">
    <property type="entry name" value="panC"/>
    <property type="match status" value="1"/>
</dbReference>
<dbReference type="PANTHER" id="PTHR21299">
    <property type="entry name" value="CYTIDYLATE KINASE/PANTOATE-BETA-ALANINE LIGASE"/>
    <property type="match status" value="1"/>
</dbReference>
<dbReference type="PANTHER" id="PTHR21299:SF1">
    <property type="entry name" value="PANTOATE--BETA-ALANINE LIGASE"/>
    <property type="match status" value="1"/>
</dbReference>
<dbReference type="Pfam" id="PF02569">
    <property type="entry name" value="Pantoate_ligase"/>
    <property type="match status" value="1"/>
</dbReference>
<dbReference type="SUPFAM" id="SSF52374">
    <property type="entry name" value="Nucleotidylyl transferase"/>
    <property type="match status" value="1"/>
</dbReference>
<reference key="1">
    <citation type="submission" date="2003-10" db="EMBL/GenBank/DDBJ databases">
        <title>The complete genome sequence of the alkaliphilic Bacillus clausii KSM-K16.</title>
        <authorList>
            <person name="Takaki Y."/>
            <person name="Kageyama Y."/>
            <person name="Shimamura S."/>
            <person name="Suzuki H."/>
            <person name="Nishi S."/>
            <person name="Hatada Y."/>
            <person name="Kawai S."/>
            <person name="Ito S."/>
            <person name="Horikoshi K."/>
        </authorList>
    </citation>
    <scope>NUCLEOTIDE SEQUENCE [LARGE SCALE GENOMIC DNA]</scope>
    <source>
        <strain>KSM-K16</strain>
    </source>
</reference>
<name>PANC_SHOC1</name>
<protein>
    <recommendedName>
        <fullName evidence="1">Pantothenate synthetase</fullName>
        <shortName evidence="1">PS</shortName>
        <ecNumber evidence="1">6.3.2.1</ecNumber>
    </recommendedName>
    <alternativeName>
        <fullName evidence="1">Pantoate--beta-alanine ligase</fullName>
    </alternativeName>
    <alternativeName>
        <fullName evidence="1">Pantoate-activating enzyme</fullName>
    </alternativeName>
</protein>
<organism>
    <name type="scientific">Shouchella clausii (strain KSM-K16)</name>
    <name type="common">Alkalihalobacillus clausii</name>
    <dbReference type="NCBI Taxonomy" id="66692"/>
    <lineage>
        <taxon>Bacteria</taxon>
        <taxon>Bacillati</taxon>
        <taxon>Bacillota</taxon>
        <taxon>Bacilli</taxon>
        <taxon>Bacillales</taxon>
        <taxon>Bacillaceae</taxon>
        <taxon>Shouchella</taxon>
    </lineage>
</organism>
<feature type="chain" id="PRO_0000128201" description="Pantothenate synthetase">
    <location>
        <begin position="1"/>
        <end position="302"/>
    </location>
</feature>
<feature type="active site" description="Proton donor" evidence="1">
    <location>
        <position position="37"/>
    </location>
</feature>
<feature type="binding site" evidence="1">
    <location>
        <begin position="30"/>
        <end position="37"/>
    </location>
    <ligand>
        <name>ATP</name>
        <dbReference type="ChEBI" id="CHEBI:30616"/>
    </ligand>
</feature>
<feature type="binding site" evidence="1">
    <location>
        <position position="61"/>
    </location>
    <ligand>
        <name>(R)-pantoate</name>
        <dbReference type="ChEBI" id="CHEBI:15980"/>
    </ligand>
</feature>
<feature type="binding site" evidence="1">
    <location>
        <position position="61"/>
    </location>
    <ligand>
        <name>beta-alanine</name>
        <dbReference type="ChEBI" id="CHEBI:57966"/>
    </ligand>
</feature>
<feature type="binding site" evidence="1">
    <location>
        <begin position="147"/>
        <end position="150"/>
    </location>
    <ligand>
        <name>ATP</name>
        <dbReference type="ChEBI" id="CHEBI:30616"/>
    </ligand>
</feature>
<feature type="binding site" evidence="1">
    <location>
        <position position="153"/>
    </location>
    <ligand>
        <name>(R)-pantoate</name>
        <dbReference type="ChEBI" id="CHEBI:15980"/>
    </ligand>
</feature>
<feature type="binding site" evidence="1">
    <location>
        <position position="176"/>
    </location>
    <ligand>
        <name>ATP</name>
        <dbReference type="ChEBI" id="CHEBI:30616"/>
    </ligand>
</feature>
<feature type="binding site" evidence="1">
    <location>
        <begin position="184"/>
        <end position="187"/>
    </location>
    <ligand>
        <name>ATP</name>
        <dbReference type="ChEBI" id="CHEBI:30616"/>
    </ligand>
</feature>
<accession>Q5WGA4</accession>